<evidence type="ECO:0000250" key="1"/>
<evidence type="ECO:0000250" key="2">
    <source>
        <dbReference type="UniProtKB" id="Q86T03"/>
    </source>
</evidence>
<evidence type="ECO:0000255" key="3"/>
<evidence type="ECO:0000256" key="4">
    <source>
        <dbReference type="SAM" id="MobiDB-lite"/>
    </source>
</evidence>
<keyword id="KW-0967">Endosome</keyword>
<keyword id="KW-0378">Hydrolase</keyword>
<keyword id="KW-0443">Lipid metabolism</keyword>
<keyword id="KW-0458">Lysosome</keyword>
<keyword id="KW-0472">Membrane</keyword>
<keyword id="KW-1185">Reference proteome</keyword>
<keyword id="KW-0812">Transmembrane</keyword>
<keyword id="KW-1133">Transmembrane helix</keyword>
<protein>
    <recommendedName>
        <fullName>Type 1 phosphatidylinositol 4,5-bisphosphate 4-phosphatase</fullName>
        <shortName>Type 1 PtdIns-4,5-P2 4-Ptase</shortName>
        <ecNumber evidence="2">3.1.3.78</ecNumber>
    </recommendedName>
    <alternativeName>
        <fullName>PtdIns-4,5-P2 4-Ptase I</fullName>
    </alternativeName>
    <alternativeName>
        <fullName>Transmembrane protein 55B</fullName>
    </alternativeName>
</protein>
<feature type="chain" id="PRO_0000235235" description="Type 1 phosphatidylinositol 4,5-bisphosphate 4-phosphatase">
    <location>
        <begin position="1"/>
        <end position="281"/>
    </location>
</feature>
<feature type="transmembrane region" description="Helical" evidence="3">
    <location>
        <begin position="216"/>
        <end position="236"/>
    </location>
</feature>
<feature type="transmembrane region" description="Helical" evidence="3">
    <location>
        <begin position="251"/>
        <end position="271"/>
    </location>
</feature>
<feature type="region of interest" description="Disordered" evidence="4">
    <location>
        <begin position="1"/>
        <end position="80"/>
    </location>
</feature>
<feature type="short sequence motif" description="CX5R motif">
    <location>
        <begin position="137"/>
        <end position="143"/>
    </location>
</feature>
<feature type="compositionally biased region" description="Gly residues" evidence="4">
    <location>
        <begin position="14"/>
        <end position="23"/>
    </location>
</feature>
<feature type="compositionally biased region" description="Low complexity" evidence="4">
    <location>
        <begin position="24"/>
        <end position="35"/>
    </location>
</feature>
<feature type="active site" evidence="1">
    <location>
        <position position="137"/>
    </location>
</feature>
<name>PP4P1_XENLA</name>
<comment type="function">
    <text evidence="2">Catalyzes the hydrolysis of phosphatidylinositol-4,5-bisphosphate (PtdIns-4,5-P2) to phosphatidylinositol-4-phosphate (PtdIns-4-P).</text>
</comment>
<comment type="catalytic activity">
    <reaction evidence="2">
        <text>a 1,2-diacyl-sn-glycero-3-phospho-(1D-myo-inositol-4,5-bisphosphate) + H2O = a 1,2-diacyl-sn-glycero-3-phospho-(1D-myo-inositol-5-phosphate) + phosphate</text>
        <dbReference type="Rhea" id="RHEA:25674"/>
        <dbReference type="ChEBI" id="CHEBI:15377"/>
        <dbReference type="ChEBI" id="CHEBI:43474"/>
        <dbReference type="ChEBI" id="CHEBI:57795"/>
        <dbReference type="ChEBI" id="CHEBI:58456"/>
        <dbReference type="EC" id="3.1.3.78"/>
    </reaction>
</comment>
<comment type="subcellular location">
    <subcellularLocation>
        <location evidence="2">Late endosome membrane</location>
        <topology evidence="3">Multi-pass membrane protein</topology>
    </subcellularLocation>
    <subcellularLocation>
        <location evidence="2">Lysosome membrane</location>
        <topology evidence="3">Multi-pass membrane protein</topology>
    </subcellularLocation>
</comment>
<gene>
    <name evidence="2" type="primary">pip4p1</name>
    <name type="synonym">tmem55b</name>
</gene>
<dbReference type="EC" id="3.1.3.78" evidence="2"/>
<dbReference type="EMBL" id="BC083005">
    <property type="protein sequence ID" value="AAH83005.1"/>
    <property type="molecule type" value="mRNA"/>
</dbReference>
<dbReference type="RefSeq" id="NP_001088129.1">
    <property type="nucleotide sequence ID" value="NM_001094660.1"/>
</dbReference>
<dbReference type="SMR" id="Q5XKA6"/>
<dbReference type="GeneID" id="494834"/>
<dbReference type="KEGG" id="xla:494834"/>
<dbReference type="AGR" id="Xenbase:XB-GENE-6255074"/>
<dbReference type="CTD" id="494834"/>
<dbReference type="Xenbase" id="XB-GENE-6255074">
    <property type="gene designation" value="pip4p1.L"/>
</dbReference>
<dbReference type="OMA" id="CKNSFLW"/>
<dbReference type="OrthoDB" id="9939933at2759"/>
<dbReference type="Proteomes" id="UP000186698">
    <property type="component" value="Chromosome 1L"/>
</dbReference>
<dbReference type="Bgee" id="494834">
    <property type="expression patterns" value="Expressed in brain and 19 other cell types or tissues"/>
</dbReference>
<dbReference type="GO" id="GO:0031902">
    <property type="term" value="C:late endosome membrane"/>
    <property type="evidence" value="ECO:0000318"/>
    <property type="project" value="GO_Central"/>
</dbReference>
<dbReference type="GO" id="GO:0005765">
    <property type="term" value="C:lysosomal membrane"/>
    <property type="evidence" value="ECO:0000318"/>
    <property type="project" value="GO_Central"/>
</dbReference>
<dbReference type="GO" id="GO:0030670">
    <property type="term" value="C:phagocytic vesicle membrane"/>
    <property type="evidence" value="ECO:0000318"/>
    <property type="project" value="GO_Central"/>
</dbReference>
<dbReference type="GO" id="GO:0005886">
    <property type="term" value="C:plasma membrane"/>
    <property type="evidence" value="ECO:0000318"/>
    <property type="project" value="GO_Central"/>
</dbReference>
<dbReference type="GO" id="GO:0034597">
    <property type="term" value="F:phosphatidylinositol-4,5-bisphosphate 4-phosphatase activity"/>
    <property type="evidence" value="ECO:0000318"/>
    <property type="project" value="GO_Central"/>
</dbReference>
<dbReference type="GO" id="GO:0046856">
    <property type="term" value="P:phosphatidylinositol dephosphorylation"/>
    <property type="evidence" value="ECO:0000318"/>
    <property type="project" value="GO_Central"/>
</dbReference>
<dbReference type="InterPro" id="IPR019178">
    <property type="entry name" value="PtdIns-P2-Ptase"/>
</dbReference>
<dbReference type="PANTHER" id="PTHR21014">
    <property type="entry name" value="PHOSPHATIDYLINOSITOL-4,5-BISPHOSPHATE 4-PHOSPHATASE"/>
    <property type="match status" value="1"/>
</dbReference>
<dbReference type="PANTHER" id="PTHR21014:SF2">
    <property type="entry name" value="TYPE 1 PHOSPHATIDYLINOSITOL 4,5-BISPHOSPHATE 4-PHOSPHATASE"/>
    <property type="match status" value="1"/>
</dbReference>
<dbReference type="Pfam" id="PF09788">
    <property type="entry name" value="Tmemb_55A"/>
    <property type="match status" value="1"/>
</dbReference>
<organism>
    <name type="scientific">Xenopus laevis</name>
    <name type="common">African clawed frog</name>
    <dbReference type="NCBI Taxonomy" id="8355"/>
    <lineage>
        <taxon>Eukaryota</taxon>
        <taxon>Metazoa</taxon>
        <taxon>Chordata</taxon>
        <taxon>Craniata</taxon>
        <taxon>Vertebrata</taxon>
        <taxon>Euteleostomi</taxon>
        <taxon>Amphibia</taxon>
        <taxon>Batrachia</taxon>
        <taxon>Anura</taxon>
        <taxon>Pipoidea</taxon>
        <taxon>Pipidae</taxon>
        <taxon>Xenopodinae</taxon>
        <taxon>Xenopus</taxon>
        <taxon>Xenopus</taxon>
    </lineage>
</organism>
<sequence length="281" mass="29750">MADGERSPLLSDLGDGGGMGAAMGPGAPSPGSALPTAPPYGGPGPASNKPQGFPEFPAAHGSVITGEDPPPYSPLTSPESGSAPMITCRVCQSLINVEGKMHQHVVKCGVCNEATPIKNAPQGKKYVRCPCNCLLICKVTSQRIACPRPYCKRIINLGPVHAGPLSPEPQPVGVRVICGHCKNNFLWTEFSDRTLARCPHCRKVSSIGMRYPRKRCFCCFLLGVLLALAAAGLVGGTWTLAYKYGGIYASWAILLLLALACIGRGIYWACMRVSHPVQSFS</sequence>
<proteinExistence type="evidence at transcript level"/>
<accession>Q5XKA6</accession>
<reference key="1">
    <citation type="submission" date="2004-09" db="EMBL/GenBank/DDBJ databases">
        <authorList>
            <consortium name="NIH - Xenopus Gene Collection (XGC) project"/>
        </authorList>
    </citation>
    <scope>NUCLEOTIDE SEQUENCE [LARGE SCALE MRNA]</scope>
    <source>
        <tissue>Liver</tissue>
    </source>
</reference>